<protein>
    <recommendedName>
        <fullName evidence="1">Glutamate-1-semialdehyde 2,1-aminomutase</fullName>
        <shortName evidence="1">GSA</shortName>
        <ecNumber evidence="1">5.4.3.8</ecNumber>
    </recommendedName>
    <alternativeName>
        <fullName evidence="1">Glutamate-1-semialdehyde aminotransferase</fullName>
        <shortName evidence="1">GSA-AT</shortName>
    </alternativeName>
</protein>
<keyword id="KW-0963">Cytoplasm</keyword>
<keyword id="KW-0413">Isomerase</keyword>
<keyword id="KW-0627">Porphyrin biosynthesis</keyword>
<keyword id="KW-0663">Pyridoxal phosphate</keyword>
<dbReference type="EC" id="5.4.3.8" evidence="1"/>
<dbReference type="EMBL" id="AE017283">
    <property type="protein sequence ID" value="AAT82058.1"/>
    <property type="molecule type" value="Genomic_DNA"/>
</dbReference>
<dbReference type="RefSeq" id="WP_002531199.1">
    <property type="nucleotide sequence ID" value="NZ_CP025935.1"/>
</dbReference>
<dbReference type="SMR" id="Q6AB08"/>
<dbReference type="EnsemblBacteria" id="AAT82058">
    <property type="protein sequence ID" value="AAT82058"/>
    <property type="gene ID" value="PPA0301"/>
</dbReference>
<dbReference type="KEGG" id="pac:PPA0301"/>
<dbReference type="PATRIC" id="fig|267747.3.peg.312"/>
<dbReference type="eggNOG" id="COG0001">
    <property type="taxonomic scope" value="Bacteria"/>
</dbReference>
<dbReference type="HOGENOM" id="CLU_016922_1_5_11"/>
<dbReference type="UniPathway" id="UPA00251">
    <property type="reaction ID" value="UER00317"/>
</dbReference>
<dbReference type="Proteomes" id="UP000000603">
    <property type="component" value="Chromosome"/>
</dbReference>
<dbReference type="GO" id="GO:0005737">
    <property type="term" value="C:cytoplasm"/>
    <property type="evidence" value="ECO:0007669"/>
    <property type="project" value="UniProtKB-SubCell"/>
</dbReference>
<dbReference type="GO" id="GO:0042286">
    <property type="term" value="F:glutamate-1-semialdehyde 2,1-aminomutase activity"/>
    <property type="evidence" value="ECO:0007669"/>
    <property type="project" value="UniProtKB-UniRule"/>
</dbReference>
<dbReference type="GO" id="GO:0030170">
    <property type="term" value="F:pyridoxal phosphate binding"/>
    <property type="evidence" value="ECO:0007669"/>
    <property type="project" value="InterPro"/>
</dbReference>
<dbReference type="GO" id="GO:0008483">
    <property type="term" value="F:transaminase activity"/>
    <property type="evidence" value="ECO:0007669"/>
    <property type="project" value="InterPro"/>
</dbReference>
<dbReference type="GO" id="GO:0006782">
    <property type="term" value="P:protoporphyrinogen IX biosynthetic process"/>
    <property type="evidence" value="ECO:0007669"/>
    <property type="project" value="UniProtKB-UniRule"/>
</dbReference>
<dbReference type="CDD" id="cd00610">
    <property type="entry name" value="OAT_like"/>
    <property type="match status" value="1"/>
</dbReference>
<dbReference type="FunFam" id="3.40.640.10:FF:000021">
    <property type="entry name" value="Glutamate-1-semialdehyde 2,1-aminomutase"/>
    <property type="match status" value="1"/>
</dbReference>
<dbReference type="Gene3D" id="3.90.1150.10">
    <property type="entry name" value="Aspartate Aminotransferase, domain 1"/>
    <property type="match status" value="1"/>
</dbReference>
<dbReference type="Gene3D" id="3.40.640.10">
    <property type="entry name" value="Type I PLP-dependent aspartate aminotransferase-like (Major domain)"/>
    <property type="match status" value="1"/>
</dbReference>
<dbReference type="HAMAP" id="MF_00375">
    <property type="entry name" value="HemL_aminotrans_3"/>
    <property type="match status" value="1"/>
</dbReference>
<dbReference type="InterPro" id="IPR004639">
    <property type="entry name" value="4pyrrol_synth_GluAld_NH2Trfase"/>
</dbReference>
<dbReference type="InterPro" id="IPR005814">
    <property type="entry name" value="Aminotrans_3"/>
</dbReference>
<dbReference type="InterPro" id="IPR015424">
    <property type="entry name" value="PyrdxlP-dep_Trfase"/>
</dbReference>
<dbReference type="InterPro" id="IPR015421">
    <property type="entry name" value="PyrdxlP-dep_Trfase_major"/>
</dbReference>
<dbReference type="InterPro" id="IPR015422">
    <property type="entry name" value="PyrdxlP-dep_Trfase_small"/>
</dbReference>
<dbReference type="NCBIfam" id="TIGR00713">
    <property type="entry name" value="hemL"/>
    <property type="match status" value="1"/>
</dbReference>
<dbReference type="NCBIfam" id="NF000818">
    <property type="entry name" value="PRK00062.1"/>
    <property type="match status" value="1"/>
</dbReference>
<dbReference type="PANTHER" id="PTHR43713">
    <property type="entry name" value="GLUTAMATE-1-SEMIALDEHYDE 2,1-AMINOMUTASE"/>
    <property type="match status" value="1"/>
</dbReference>
<dbReference type="PANTHER" id="PTHR43713:SF3">
    <property type="entry name" value="GLUTAMATE-1-SEMIALDEHYDE 2,1-AMINOMUTASE 1, CHLOROPLASTIC-RELATED"/>
    <property type="match status" value="1"/>
</dbReference>
<dbReference type="Pfam" id="PF00202">
    <property type="entry name" value="Aminotran_3"/>
    <property type="match status" value="1"/>
</dbReference>
<dbReference type="SUPFAM" id="SSF53383">
    <property type="entry name" value="PLP-dependent transferases"/>
    <property type="match status" value="1"/>
</dbReference>
<gene>
    <name evidence="1" type="primary">hemL</name>
    <name type="ordered locus">PPA0301</name>
</gene>
<accession>Q6AB08</accession>
<sequence length="436" mass="45501">MTSNAELFSAAQAVIPGGVDSPVRAYGSVGGVPRFIEKAQGPWIWDAEGTRYVDLVCTWGPALLGHARPEVVSAVQVAASKGLSFGAPTRTETELADAIIERMAPVEKVRFVSTGTEATMTAVRLARGATGRDVIVKFAGNYHGHSDVLLAAAGSGVATAGLPGSAGVPAASTADTIVVDYNDVAALDAVFSERGDQIAAVIVESCPANMGVVPPEPGFNAAIRRLTTEHGALMITDEVLTGFRCSPSGFWGLQQQAGEDFAPDIFTFGKVVGGGMPLAALGGHADVMDLLAPTGPVYQAGTLSGNPLATVAGVKTLQLADAEVYQRLDVRSEKWRNELESALDAAGVTYRLQNAGNLFSVFLGVDSPVRNYDNAKSQNAEAYTAFFHAMLDAGVNLPPSCFEAWFLSDAHDDEAFEVFRAALPRAAQAAAQVISA</sequence>
<comment type="catalytic activity">
    <reaction evidence="1">
        <text>(S)-4-amino-5-oxopentanoate = 5-aminolevulinate</text>
        <dbReference type="Rhea" id="RHEA:14265"/>
        <dbReference type="ChEBI" id="CHEBI:57501"/>
        <dbReference type="ChEBI" id="CHEBI:356416"/>
        <dbReference type="EC" id="5.4.3.8"/>
    </reaction>
</comment>
<comment type="cofactor">
    <cofactor evidence="1">
        <name>pyridoxal 5'-phosphate</name>
        <dbReference type="ChEBI" id="CHEBI:597326"/>
    </cofactor>
</comment>
<comment type="pathway">
    <text evidence="1">Porphyrin-containing compound metabolism; protoporphyrin-IX biosynthesis; 5-aminolevulinate from L-glutamyl-tRNA(Glu): step 2/2.</text>
</comment>
<comment type="subunit">
    <text evidence="1">Homodimer.</text>
</comment>
<comment type="subcellular location">
    <subcellularLocation>
        <location evidence="1">Cytoplasm</location>
    </subcellularLocation>
</comment>
<comment type="similarity">
    <text evidence="1">Belongs to the class-III pyridoxal-phosphate-dependent aminotransferase family. HemL subfamily.</text>
</comment>
<evidence type="ECO:0000255" key="1">
    <source>
        <dbReference type="HAMAP-Rule" id="MF_00375"/>
    </source>
</evidence>
<name>GSA_CUTAK</name>
<reference key="1">
    <citation type="journal article" date="2004" name="Science">
        <title>The complete genome sequence of Propionibacterium acnes, a commensal of human skin.</title>
        <authorList>
            <person name="Brueggemann H."/>
            <person name="Henne A."/>
            <person name="Hoster F."/>
            <person name="Liesegang H."/>
            <person name="Wiezer A."/>
            <person name="Strittmatter A."/>
            <person name="Hujer S."/>
            <person name="Duerre P."/>
            <person name="Gottschalk G."/>
        </authorList>
    </citation>
    <scope>NUCLEOTIDE SEQUENCE [LARGE SCALE GENOMIC DNA]</scope>
    <source>
        <strain>DSM 16379 / KPA171202</strain>
    </source>
</reference>
<feature type="chain" id="PRO_0000243601" description="Glutamate-1-semialdehyde 2,1-aminomutase">
    <location>
        <begin position="1"/>
        <end position="436"/>
    </location>
</feature>
<feature type="modified residue" description="N6-(pyridoxal phosphate)lysine" evidence="1">
    <location>
        <position position="270"/>
    </location>
</feature>
<proteinExistence type="inferred from homology"/>
<organism>
    <name type="scientific">Cutibacterium acnes (strain DSM 16379 / KPA171202)</name>
    <name type="common">Propionibacterium acnes</name>
    <dbReference type="NCBI Taxonomy" id="267747"/>
    <lineage>
        <taxon>Bacteria</taxon>
        <taxon>Bacillati</taxon>
        <taxon>Actinomycetota</taxon>
        <taxon>Actinomycetes</taxon>
        <taxon>Propionibacteriales</taxon>
        <taxon>Propionibacteriaceae</taxon>
        <taxon>Cutibacterium</taxon>
    </lineage>
</organism>